<protein>
    <recommendedName>
        <fullName evidence="1">Small ribosomal subunit protein uS11</fullName>
    </recommendedName>
    <alternativeName>
        <fullName evidence="2">30S ribosomal protein S11</fullName>
    </alternativeName>
</protein>
<accession>A1ALW5</accession>
<name>RS11_PELPD</name>
<gene>
    <name evidence="1" type="primary">rpsK</name>
    <name type="ordered locus">Ppro_0704</name>
</gene>
<proteinExistence type="inferred from homology"/>
<dbReference type="EMBL" id="CP000482">
    <property type="protein sequence ID" value="ABK98335.1"/>
    <property type="molecule type" value="Genomic_DNA"/>
</dbReference>
<dbReference type="RefSeq" id="WP_011734647.1">
    <property type="nucleotide sequence ID" value="NC_008609.1"/>
</dbReference>
<dbReference type="SMR" id="A1ALW5"/>
<dbReference type="STRING" id="338966.Ppro_0704"/>
<dbReference type="KEGG" id="ppd:Ppro_0704"/>
<dbReference type="eggNOG" id="COG0100">
    <property type="taxonomic scope" value="Bacteria"/>
</dbReference>
<dbReference type="HOGENOM" id="CLU_072439_5_0_7"/>
<dbReference type="OrthoDB" id="9806415at2"/>
<dbReference type="Proteomes" id="UP000006732">
    <property type="component" value="Chromosome"/>
</dbReference>
<dbReference type="GO" id="GO:1990904">
    <property type="term" value="C:ribonucleoprotein complex"/>
    <property type="evidence" value="ECO:0007669"/>
    <property type="project" value="UniProtKB-KW"/>
</dbReference>
<dbReference type="GO" id="GO:0005840">
    <property type="term" value="C:ribosome"/>
    <property type="evidence" value="ECO:0007669"/>
    <property type="project" value="UniProtKB-KW"/>
</dbReference>
<dbReference type="GO" id="GO:0019843">
    <property type="term" value="F:rRNA binding"/>
    <property type="evidence" value="ECO:0007669"/>
    <property type="project" value="UniProtKB-UniRule"/>
</dbReference>
<dbReference type="GO" id="GO:0003735">
    <property type="term" value="F:structural constituent of ribosome"/>
    <property type="evidence" value="ECO:0007669"/>
    <property type="project" value="InterPro"/>
</dbReference>
<dbReference type="GO" id="GO:0006412">
    <property type="term" value="P:translation"/>
    <property type="evidence" value="ECO:0007669"/>
    <property type="project" value="UniProtKB-UniRule"/>
</dbReference>
<dbReference type="FunFam" id="3.30.420.80:FF:000001">
    <property type="entry name" value="30S ribosomal protein S11"/>
    <property type="match status" value="1"/>
</dbReference>
<dbReference type="Gene3D" id="3.30.420.80">
    <property type="entry name" value="Ribosomal protein S11"/>
    <property type="match status" value="1"/>
</dbReference>
<dbReference type="HAMAP" id="MF_01310">
    <property type="entry name" value="Ribosomal_uS11"/>
    <property type="match status" value="1"/>
</dbReference>
<dbReference type="InterPro" id="IPR001971">
    <property type="entry name" value="Ribosomal_uS11"/>
</dbReference>
<dbReference type="InterPro" id="IPR019981">
    <property type="entry name" value="Ribosomal_uS11_bac-type"/>
</dbReference>
<dbReference type="InterPro" id="IPR018102">
    <property type="entry name" value="Ribosomal_uS11_CS"/>
</dbReference>
<dbReference type="InterPro" id="IPR036967">
    <property type="entry name" value="Ribosomal_uS11_sf"/>
</dbReference>
<dbReference type="NCBIfam" id="NF003698">
    <property type="entry name" value="PRK05309.1"/>
    <property type="match status" value="1"/>
</dbReference>
<dbReference type="NCBIfam" id="TIGR03632">
    <property type="entry name" value="uS11_bact"/>
    <property type="match status" value="1"/>
</dbReference>
<dbReference type="PANTHER" id="PTHR11759">
    <property type="entry name" value="40S RIBOSOMAL PROTEIN S14/30S RIBOSOMAL PROTEIN S11"/>
    <property type="match status" value="1"/>
</dbReference>
<dbReference type="Pfam" id="PF00411">
    <property type="entry name" value="Ribosomal_S11"/>
    <property type="match status" value="1"/>
</dbReference>
<dbReference type="PIRSF" id="PIRSF002131">
    <property type="entry name" value="Ribosomal_S11"/>
    <property type="match status" value="1"/>
</dbReference>
<dbReference type="SUPFAM" id="SSF53137">
    <property type="entry name" value="Translational machinery components"/>
    <property type="match status" value="1"/>
</dbReference>
<dbReference type="PROSITE" id="PS00054">
    <property type="entry name" value="RIBOSOMAL_S11"/>
    <property type="match status" value="1"/>
</dbReference>
<evidence type="ECO:0000255" key="1">
    <source>
        <dbReference type="HAMAP-Rule" id="MF_01310"/>
    </source>
</evidence>
<evidence type="ECO:0000305" key="2"/>
<reference key="1">
    <citation type="submission" date="2006-10" db="EMBL/GenBank/DDBJ databases">
        <title>Complete sequence of chromosome of Pelobacter propionicus DSM 2379.</title>
        <authorList>
            <consortium name="US DOE Joint Genome Institute"/>
            <person name="Copeland A."/>
            <person name="Lucas S."/>
            <person name="Lapidus A."/>
            <person name="Barry K."/>
            <person name="Detter J.C."/>
            <person name="Glavina del Rio T."/>
            <person name="Hammon N."/>
            <person name="Israni S."/>
            <person name="Dalin E."/>
            <person name="Tice H."/>
            <person name="Pitluck S."/>
            <person name="Saunders E."/>
            <person name="Brettin T."/>
            <person name="Bruce D."/>
            <person name="Han C."/>
            <person name="Tapia R."/>
            <person name="Schmutz J."/>
            <person name="Larimer F."/>
            <person name="Land M."/>
            <person name="Hauser L."/>
            <person name="Kyrpides N."/>
            <person name="Kim E."/>
            <person name="Lovley D."/>
            <person name="Richardson P."/>
        </authorList>
    </citation>
    <scope>NUCLEOTIDE SEQUENCE [LARGE SCALE GENOMIC DNA]</scope>
    <source>
        <strain>DSM 2379 / NBRC 103807 / OttBd1</strain>
    </source>
</reference>
<feature type="chain" id="PRO_0000294817" description="Small ribosomal subunit protein uS11">
    <location>
        <begin position="1"/>
        <end position="131"/>
    </location>
</feature>
<keyword id="KW-1185">Reference proteome</keyword>
<keyword id="KW-0687">Ribonucleoprotein</keyword>
<keyword id="KW-0689">Ribosomal protein</keyword>
<keyword id="KW-0694">RNA-binding</keyword>
<keyword id="KW-0699">rRNA-binding</keyword>
<sequence length="131" mass="14079">MASPAKKVVRKKRERKNVTNGVAHIHATFNNTMITIADTAGNVLAWSTSGAKGFKGSRKSTPFAAQVAAEDCAKKAQEHGLRNVEVYVKGPGSGRESALRALQAAGFNISFIKDVTPIPHNGCRPPKKRRV</sequence>
<comment type="function">
    <text evidence="1">Located on the platform of the 30S subunit, it bridges several disparate RNA helices of the 16S rRNA. Forms part of the Shine-Dalgarno cleft in the 70S ribosome.</text>
</comment>
<comment type="subunit">
    <text evidence="1">Part of the 30S ribosomal subunit. Interacts with proteins S7 and S18. Binds to IF-3.</text>
</comment>
<comment type="similarity">
    <text evidence="1">Belongs to the universal ribosomal protein uS11 family.</text>
</comment>
<organism>
    <name type="scientific">Pelobacter propionicus (strain DSM 2379 / NBRC 103807 / OttBd1)</name>
    <dbReference type="NCBI Taxonomy" id="338966"/>
    <lineage>
        <taxon>Bacteria</taxon>
        <taxon>Pseudomonadati</taxon>
        <taxon>Thermodesulfobacteriota</taxon>
        <taxon>Desulfuromonadia</taxon>
        <taxon>Desulfuromonadales</taxon>
        <taxon>Desulfuromonadaceae</taxon>
        <taxon>Pelobacter</taxon>
    </lineage>
</organism>